<reference key="1">
    <citation type="journal article" date="2002" name="Nature">
        <title>The genome sequence of Schizosaccharomyces pombe.</title>
        <authorList>
            <person name="Wood V."/>
            <person name="Gwilliam R."/>
            <person name="Rajandream M.A."/>
            <person name="Lyne M.H."/>
            <person name="Lyne R."/>
            <person name="Stewart A."/>
            <person name="Sgouros J.G."/>
            <person name="Peat N."/>
            <person name="Hayles J."/>
            <person name="Baker S.G."/>
            <person name="Basham D."/>
            <person name="Bowman S."/>
            <person name="Brooks K."/>
            <person name="Brown D."/>
            <person name="Brown S."/>
            <person name="Chillingworth T."/>
            <person name="Churcher C.M."/>
            <person name="Collins M."/>
            <person name="Connor R."/>
            <person name="Cronin A."/>
            <person name="Davis P."/>
            <person name="Feltwell T."/>
            <person name="Fraser A."/>
            <person name="Gentles S."/>
            <person name="Goble A."/>
            <person name="Hamlin N."/>
            <person name="Harris D.E."/>
            <person name="Hidalgo J."/>
            <person name="Hodgson G."/>
            <person name="Holroyd S."/>
            <person name="Hornsby T."/>
            <person name="Howarth S."/>
            <person name="Huckle E.J."/>
            <person name="Hunt S."/>
            <person name="Jagels K."/>
            <person name="James K.D."/>
            <person name="Jones L."/>
            <person name="Jones M."/>
            <person name="Leather S."/>
            <person name="McDonald S."/>
            <person name="McLean J."/>
            <person name="Mooney P."/>
            <person name="Moule S."/>
            <person name="Mungall K.L."/>
            <person name="Murphy L.D."/>
            <person name="Niblett D."/>
            <person name="Odell C."/>
            <person name="Oliver K."/>
            <person name="O'Neil S."/>
            <person name="Pearson D."/>
            <person name="Quail M.A."/>
            <person name="Rabbinowitsch E."/>
            <person name="Rutherford K.M."/>
            <person name="Rutter S."/>
            <person name="Saunders D."/>
            <person name="Seeger K."/>
            <person name="Sharp S."/>
            <person name="Skelton J."/>
            <person name="Simmonds M.N."/>
            <person name="Squares R."/>
            <person name="Squares S."/>
            <person name="Stevens K."/>
            <person name="Taylor K."/>
            <person name="Taylor R.G."/>
            <person name="Tivey A."/>
            <person name="Walsh S.V."/>
            <person name="Warren T."/>
            <person name="Whitehead S."/>
            <person name="Woodward J.R."/>
            <person name="Volckaert G."/>
            <person name="Aert R."/>
            <person name="Robben J."/>
            <person name="Grymonprez B."/>
            <person name="Weltjens I."/>
            <person name="Vanstreels E."/>
            <person name="Rieger M."/>
            <person name="Schaefer M."/>
            <person name="Mueller-Auer S."/>
            <person name="Gabel C."/>
            <person name="Fuchs M."/>
            <person name="Duesterhoeft A."/>
            <person name="Fritzc C."/>
            <person name="Holzer E."/>
            <person name="Moestl D."/>
            <person name="Hilbert H."/>
            <person name="Borzym K."/>
            <person name="Langer I."/>
            <person name="Beck A."/>
            <person name="Lehrach H."/>
            <person name="Reinhardt R."/>
            <person name="Pohl T.M."/>
            <person name="Eger P."/>
            <person name="Zimmermann W."/>
            <person name="Wedler H."/>
            <person name="Wambutt R."/>
            <person name="Purnelle B."/>
            <person name="Goffeau A."/>
            <person name="Cadieu E."/>
            <person name="Dreano S."/>
            <person name="Gloux S."/>
            <person name="Lelaure V."/>
            <person name="Mottier S."/>
            <person name="Galibert F."/>
            <person name="Aves S.J."/>
            <person name="Xiang Z."/>
            <person name="Hunt C."/>
            <person name="Moore K."/>
            <person name="Hurst S.M."/>
            <person name="Lucas M."/>
            <person name="Rochet M."/>
            <person name="Gaillardin C."/>
            <person name="Tallada V.A."/>
            <person name="Garzon A."/>
            <person name="Thode G."/>
            <person name="Daga R.R."/>
            <person name="Cruzado L."/>
            <person name="Jimenez J."/>
            <person name="Sanchez M."/>
            <person name="del Rey F."/>
            <person name="Benito J."/>
            <person name="Dominguez A."/>
            <person name="Revuelta J.L."/>
            <person name="Moreno S."/>
            <person name="Armstrong J."/>
            <person name="Forsburg S.L."/>
            <person name="Cerutti L."/>
            <person name="Lowe T."/>
            <person name="McCombie W.R."/>
            <person name="Paulsen I."/>
            <person name="Potashkin J."/>
            <person name="Shpakovski G.V."/>
            <person name="Ussery D."/>
            <person name="Barrell B.G."/>
            <person name="Nurse P."/>
        </authorList>
    </citation>
    <scope>NUCLEOTIDE SEQUENCE [LARGE SCALE GENOMIC DNA]</scope>
    <source>
        <strain>972 / ATCC 24843</strain>
    </source>
</reference>
<reference key="2">
    <citation type="journal article" date="2006" name="Nat. Biotechnol.">
        <title>ORFeome cloning and global analysis of protein localization in the fission yeast Schizosaccharomyces pombe.</title>
        <authorList>
            <person name="Matsuyama A."/>
            <person name="Arai R."/>
            <person name="Yashiroda Y."/>
            <person name="Shirai A."/>
            <person name="Kamata A."/>
            <person name="Sekido S."/>
            <person name="Kobayashi Y."/>
            <person name="Hashimoto A."/>
            <person name="Hamamoto M."/>
            <person name="Hiraoka Y."/>
            <person name="Horinouchi S."/>
            <person name="Yoshida M."/>
        </authorList>
    </citation>
    <scope>SUBCELLULAR LOCATION [LARGE SCALE ANALYSIS]</scope>
</reference>
<comment type="subcellular location">
    <subcellularLocation>
        <location evidence="2">Mitochondrion membrane</location>
        <topology evidence="2">Multi-pass membrane protein</topology>
    </subcellularLocation>
</comment>
<comment type="similarity">
    <text evidence="2">Belongs to the AIM19 family.</text>
</comment>
<organism>
    <name type="scientific">Schizosaccharomyces pombe (strain 972 / ATCC 24843)</name>
    <name type="common">Fission yeast</name>
    <dbReference type="NCBI Taxonomy" id="284812"/>
    <lineage>
        <taxon>Eukaryota</taxon>
        <taxon>Fungi</taxon>
        <taxon>Dikarya</taxon>
        <taxon>Ascomycota</taxon>
        <taxon>Taphrinomycotina</taxon>
        <taxon>Schizosaccharomycetes</taxon>
        <taxon>Schizosaccharomycetales</taxon>
        <taxon>Schizosaccharomycetaceae</taxon>
        <taxon>Schizosaccharomyces</taxon>
    </lineage>
</organism>
<keyword id="KW-0472">Membrane</keyword>
<keyword id="KW-0496">Mitochondrion</keyword>
<keyword id="KW-1185">Reference proteome</keyword>
<keyword id="KW-0812">Transmembrane</keyword>
<keyword id="KW-1133">Transmembrane helix</keyword>
<feature type="chain" id="PRO_0000351438" description="Altered inheritance of mitochondria protein 19 homolog">
    <location>
        <begin position="1"/>
        <end position="119"/>
    </location>
</feature>
<feature type="transmembrane region" description="Helical" evidence="1">
    <location>
        <begin position="13"/>
        <end position="32"/>
    </location>
</feature>
<feature type="transmembrane region" description="Helical" evidence="1">
    <location>
        <begin position="42"/>
        <end position="64"/>
    </location>
</feature>
<feature type="transmembrane region" description="Helical" evidence="1">
    <location>
        <begin position="69"/>
        <end position="86"/>
    </location>
</feature>
<feature type="transmembrane region" description="Helical" evidence="1">
    <location>
        <begin position="93"/>
        <end position="112"/>
    </location>
</feature>
<gene>
    <name type="primary">aim19</name>
    <name type="ORF">SPBC17A3.02</name>
</gene>
<dbReference type="EMBL" id="CU329671">
    <property type="protein sequence ID" value="CAB51761.1"/>
    <property type="molecule type" value="Genomic_DNA"/>
</dbReference>
<dbReference type="PIR" id="T39694">
    <property type="entry name" value="T39694"/>
</dbReference>
<dbReference type="RefSeq" id="NP_595584.1">
    <property type="nucleotide sequence ID" value="NM_001021480.2"/>
</dbReference>
<dbReference type="BioGRID" id="276721">
    <property type="interactions" value="1"/>
</dbReference>
<dbReference type="FunCoup" id="Q9UUF4">
    <property type="interactions" value="200"/>
</dbReference>
<dbReference type="STRING" id="284812.Q9UUF4"/>
<dbReference type="PaxDb" id="4896-SPBC17A3.02.1"/>
<dbReference type="EnsemblFungi" id="SPBC17A3.02.1">
    <property type="protein sequence ID" value="SPBC17A3.02.1:pep"/>
    <property type="gene ID" value="SPBC17A3.02"/>
</dbReference>
<dbReference type="GeneID" id="2540188"/>
<dbReference type="KEGG" id="spo:2540188"/>
<dbReference type="PomBase" id="SPBC17A3.02">
    <property type="gene designation" value="aim19"/>
</dbReference>
<dbReference type="VEuPathDB" id="FungiDB:SPBC17A3.02"/>
<dbReference type="eggNOG" id="ENOG502S412">
    <property type="taxonomic scope" value="Eukaryota"/>
</dbReference>
<dbReference type="HOGENOM" id="CLU_130042_0_0_1"/>
<dbReference type="InParanoid" id="Q9UUF4"/>
<dbReference type="OMA" id="CTFAGIN"/>
<dbReference type="PhylomeDB" id="Q9UUF4"/>
<dbReference type="PRO" id="PR:Q9UUF4"/>
<dbReference type="Proteomes" id="UP000002485">
    <property type="component" value="Chromosome II"/>
</dbReference>
<dbReference type="GO" id="GO:0031966">
    <property type="term" value="C:mitochondrial membrane"/>
    <property type="evidence" value="ECO:0007669"/>
    <property type="project" value="UniProtKB-SubCell"/>
</dbReference>
<dbReference type="GO" id="GO:0005739">
    <property type="term" value="C:mitochondrion"/>
    <property type="evidence" value="ECO:0007005"/>
    <property type="project" value="PomBase"/>
</dbReference>
<dbReference type="GO" id="GO:0006783">
    <property type="term" value="P:heme biosynthetic process"/>
    <property type="evidence" value="ECO:0000303"/>
    <property type="project" value="PomBase"/>
</dbReference>
<dbReference type="InterPro" id="IPR019419">
    <property type="entry name" value="AIM19"/>
</dbReference>
<dbReference type="PANTHER" id="PTHR28177">
    <property type="entry name" value="ALTERED INHERITANCE OF MITOCHONDRIA PROTEIN 19, MITOCHONDRIAL"/>
    <property type="match status" value="1"/>
</dbReference>
<dbReference type="PANTHER" id="PTHR28177:SF1">
    <property type="entry name" value="ALTERED INHERITANCE OF MITOCHONDRIA PROTEIN 19, MITOCHONDRIAL"/>
    <property type="match status" value="1"/>
</dbReference>
<dbReference type="Pfam" id="PF10315">
    <property type="entry name" value="Aim19"/>
    <property type="match status" value="1"/>
</dbReference>
<sequence length="119" mass="12846">MENKELRKSYFQRIYQSYIPAYAFGGALIASVPRAFKRPYGGPFVPGCLLCGGFNAIGGLAIASGDLTNGSGICTAWSIAYLMINATKSIKSFRLYPIALTTFATANAVGYGKTFMNEY</sequence>
<protein>
    <recommendedName>
        <fullName>Altered inheritance of mitochondria protein 19 homolog</fullName>
    </recommendedName>
</protein>
<proteinExistence type="inferred from homology"/>
<name>AIM19_SCHPO</name>
<evidence type="ECO:0000255" key="1"/>
<evidence type="ECO:0000305" key="2"/>
<accession>Q9UUF4</accession>